<organism>
    <name type="scientific">Babesia bovis</name>
    <dbReference type="NCBI Taxonomy" id="5865"/>
    <lineage>
        <taxon>Eukaryota</taxon>
        <taxon>Sar</taxon>
        <taxon>Alveolata</taxon>
        <taxon>Apicomplexa</taxon>
        <taxon>Aconoidasida</taxon>
        <taxon>Piroplasmida</taxon>
        <taxon>Babesiidae</taxon>
        <taxon>Babesia</taxon>
    </lineage>
</organism>
<reference key="1">
    <citation type="journal article" date="1984" name="Cell">
        <title>Genes of the protozoan parasite Babesia bovis that rearrange to produce RNA species with different sequences.</title>
        <authorList>
            <person name="Cowman A.F."/>
            <person name="Bernard O."/>
            <person name="Stewart N."/>
            <person name="Kemp D.J."/>
        </authorList>
    </citation>
    <scope>NUCLEOTIDE SEQUENCE [MRNA]</scope>
</reference>
<dbReference type="EMBL" id="K02832">
    <property type="status" value="NOT_ANNOTATED_CDS"/>
    <property type="molecule type" value="mRNA"/>
</dbReference>
<dbReference type="PIR" id="A03385">
    <property type="entry name" value="VUQB1B"/>
</dbReference>
<dbReference type="SMR" id="P02890"/>
<dbReference type="VEuPathDB" id="PiroplasmaDB:BBOV_I003020"/>
<proteinExistence type="evidence at transcript level"/>
<name>BAB1_BABBO</name>
<feature type="chain" id="PRO_0000064789" description="Gene BABR protein 1">
    <location>
        <begin position="1"/>
        <end position="191"/>
    </location>
</feature>
<comment type="miscellaneous">
    <text>The sequences of the gene BABR proteins are nearly identical, differing only at their carboxyl ends.</text>
</comment>
<protein>
    <recommendedName>
        <fullName>Gene BABR protein 1</fullName>
    </recommendedName>
</protein>
<sequence>MEAQSATETQKNLKTLMELIKTKRPFKSSDFDTLNLDYLSGQSNEELFKLLIDAINGMKENVAKVNEYLTEEGDHSLSGDELLKFVYKELVYDDESEFDKEKLQKLYKTFSEDSNAFATLQSYIQYLQPEENSQRWIQVHEPVKHRRRLNHNPALQEISMDSRVQPSQLDLHSPFRDCLSLLSATSFLSAF</sequence>
<accession>P02890</accession>